<comment type="function">
    <text evidence="1">Involved in nucleolar processing of pre-18S ribosomal RNA. Involved in ribosome biosynthesis (By similarity).</text>
</comment>
<comment type="subunit">
    <text evidence="1">Component of the ribosomal small subunit (SSU) processome.</text>
</comment>
<comment type="subcellular location">
    <subcellularLocation>
        <location evidence="1 2">Nucleus</location>
        <location evidence="1 2">Nucleolus</location>
    </subcellularLocation>
    <subcellularLocation>
        <location evidence="2">Membrane</location>
        <topology evidence="2">Single-pass membrane protein</topology>
    </subcellularLocation>
</comment>
<comment type="similarity">
    <text evidence="3">Belongs to the HEATR1/UTP10 family.</text>
</comment>
<evidence type="ECO:0000250" key="1">
    <source>
        <dbReference type="UniProtKB" id="P42945"/>
    </source>
</evidence>
<evidence type="ECO:0000255" key="2"/>
<evidence type="ECO:0000305" key="3"/>
<keyword id="KW-0472">Membrane</keyword>
<keyword id="KW-0539">Nucleus</keyword>
<keyword id="KW-1185">Reference proteome</keyword>
<keyword id="KW-0687">Ribonucleoprotein</keyword>
<keyword id="KW-0690">Ribosome biogenesis</keyword>
<keyword id="KW-0698">rRNA processing</keyword>
<keyword id="KW-0812">Transmembrane</keyword>
<keyword id="KW-1133">Transmembrane helix</keyword>
<reference key="1">
    <citation type="journal article" date="2004" name="Proc. Natl. Acad. Sci. U.S.A.">
        <title>The diploid genome sequence of Candida albicans.</title>
        <authorList>
            <person name="Jones T."/>
            <person name="Federspiel N.A."/>
            <person name="Chibana H."/>
            <person name="Dungan J."/>
            <person name="Kalman S."/>
            <person name="Magee B.B."/>
            <person name="Newport G."/>
            <person name="Thorstenson Y.R."/>
            <person name="Agabian N."/>
            <person name="Magee P.T."/>
            <person name="Davis R.W."/>
            <person name="Scherer S."/>
        </authorList>
    </citation>
    <scope>NUCLEOTIDE SEQUENCE [LARGE SCALE GENOMIC DNA]</scope>
    <source>
        <strain>SC5314 / ATCC MYA-2876</strain>
    </source>
</reference>
<reference key="2">
    <citation type="journal article" date="2007" name="Genome Biol.">
        <title>Assembly of the Candida albicans genome into sixteen supercontigs aligned on the eight chromosomes.</title>
        <authorList>
            <person name="van het Hoog M."/>
            <person name="Rast T.J."/>
            <person name="Martchenko M."/>
            <person name="Grindle S."/>
            <person name="Dignard D."/>
            <person name="Hogues H."/>
            <person name="Cuomo C."/>
            <person name="Berriman M."/>
            <person name="Scherer S."/>
            <person name="Magee B.B."/>
            <person name="Whiteway M."/>
            <person name="Chibana H."/>
            <person name="Nantel A."/>
            <person name="Magee P.T."/>
        </authorList>
    </citation>
    <scope>GENOME REANNOTATION</scope>
    <source>
        <strain>SC5314 / ATCC MYA-2876</strain>
    </source>
</reference>
<reference key="3">
    <citation type="journal article" date="2013" name="Genome Biol.">
        <title>Assembly of a phased diploid Candida albicans genome facilitates allele-specific measurements and provides a simple model for repeat and indel structure.</title>
        <authorList>
            <person name="Muzzey D."/>
            <person name="Schwartz K."/>
            <person name="Weissman J.S."/>
            <person name="Sherlock G."/>
        </authorList>
    </citation>
    <scope>NUCLEOTIDE SEQUENCE [LARGE SCALE GENOMIC DNA]</scope>
    <scope>GENOME REANNOTATION</scope>
    <source>
        <strain>SC5314 / ATCC MYA-2876</strain>
    </source>
</reference>
<protein>
    <recommendedName>
        <fullName>U3 small nucleolar RNA-associated protein 10</fullName>
    </recommendedName>
</protein>
<sequence length="1818" mass="204337">MSSLASQLQSINEKTASVALDRKQRSKLHSRSLIFDPKQAATQDYEYIYEIATEGLEDLCELDSRFNKFKSTLFSETSVNLDRNLQTKDVISQLDKNIDAFLTLVGPYYGLTSSLKAVEWLVRRFHANIHNAELMILTALPYFQHPVFVKVLNVIPKQNLPQIFEWLVGYKDQLKTPPASSILKAFRNDFHFFNFYSKFLNDQIKNHTVYKEQLVFYLSNTVQLLASFSKNIEELNETHIPVVLETTALMLLPQQKPKYSSSINSDLKLTSYSIISVLSSIFPFSADILKSLTVSILEDEDALKGFTKPTLIVLSQLWKHFQGNLEVIEAFKNFKIGQHELGVLDELKNENYQLSTFIILVFISTFPSNESYKLLPFIDLSNKTVFEIITKLVLQNSTTQEDSIRSNLTKIAQSLTKSDPKLFQTTLESENWKVDELELKLMSVLVESKNDEAEFDAGDEDNAVEDIEIVKTVDFTKLQSTAKSYFNTEYDEEFNLVLKELKSVLSASDAKLHVSVILTFLQKVFSTPEVALTFAFRVALTPAVPLSIRLSAIKSIRIKIKNAANGKTDFYLLIPLILLALFDNSKLIRSGFAQLLRLVIEIKTKLTTGAALFLEREIYGSVSDKKYPTPHDSLFLCSLLSEDNVKDTVLDPSRVINILFDSIFKAKNGKSKPGKYFRSFIFTQWSLCSLPIVLKANAWKIVAQANKAGTDDRFFFLDGDIENYFSKRNVWIDQASIAGIAFFDNAEVSVVGLVGGVASNDKNSNTESEWLCRALENPSGNLQMTANNRVLETFDTFKPIESRLKIVNKLVDILINDDIVEFDPMATLQELNIDRNLFLQALTSVQIGDQIPEQGIAKRRRRSSNSTKQAMVRDEINNMASGHLKKLTFLLEILESSLRKKRNVAGPDLLKVLFKILTDLEYLGNDGNLPVLYAQETLASCMLLNIVNLKSSSKEVKFDSNSIRADLIVNSIRASPSPQVQNRLLLVISELASLAPEVILHSVMPIFTFMGAHTVRQDDEFSSSALQQTVAKVIPALASNGLSPVNNEIEFLLASFATAFPHVPRHRRVKLFVSLTKTLGCAESMHLILFLMGQQYANNVHKNKNGDSQSVVEFVHGYMKSFSAEEQLAGIVAFTKLWNDIPLNQLEPGSEEFEVLNNRPVFGTTIATLGQSGLAVLRNDLLQFLDETLSSENKHELSSLKTKMALVLIDDEDSEVSKKESVLDKFRAITSFALASLDTFTNSHADIKLCSTLYSLLGNLLDLLPLNYFIDSIVASLDVDTLSDSLSIKVARNYAILASRKFETELNVAHCDQVVIESVINNLLPILIKGIKKNVDVELQQAYLDTFSTIVNKFGASGTEFASSDVSKVLIESLGIVTTDRGLLNEQPEVIIASINAITSIVNILGVKTLGLFPKVVPPALKIWESTNSLGDKESAKLLQGSVLVLLSCYIKKIPAFMSTTLEAVLLTILSSDLIDNHIRSSVLDLIVDHMDLAQVLKSLCNVWLTKKFYTNDNSGNIGLFLKTLQATINKMEKKQATTQATLFMRWLISAFEFRQYSEDNDNKFDNNTIHRLESSFHGCAIAFVMKLNDKSFRPLFANLVRWAVDGEGATLKTNEVSRLLAFFRFFNKLQDELKSIITSYFSYLLDPTSALLKRFSEGSLVATNLRRIILIGLTSSFKYDQDDYWSQQGRFDSICSPLLSQLSNIEDSIGKYLVKSVSTFVTDVSSDEYNETLVHELIKYISNANENSAATKIWSIRTLKTIFQKMGEQWLSYLPTLVPYIAELLEDDDEEVEMEVRRGLVRVIENVLGEPLDRYLS</sequence>
<gene>
    <name evidence="1" type="primary">UTP10</name>
    <name type="ordered locus">CAALFM_C114080WA</name>
    <name type="ORF">CaO19.7215</name>
</gene>
<accession>Q59ZX6</accession>
<accession>A0A1D8PFT6</accession>
<feature type="chain" id="PRO_0000308498" description="U3 small nucleolar RNA-associated protein 10">
    <location>
        <begin position="1"/>
        <end position="1818"/>
    </location>
</feature>
<feature type="transmembrane region" description="Helical" evidence="2">
    <location>
        <begin position="568"/>
        <end position="588"/>
    </location>
</feature>
<feature type="repeat" description="HEAT" evidence="2">
    <location>
        <begin position="1778"/>
        <end position="1816"/>
    </location>
</feature>
<dbReference type="EMBL" id="CP017623">
    <property type="protein sequence ID" value="AOW27008.1"/>
    <property type="molecule type" value="Genomic_DNA"/>
</dbReference>
<dbReference type="RefSeq" id="XP_715016.1">
    <property type="nucleotide sequence ID" value="XM_709923.1"/>
</dbReference>
<dbReference type="SMR" id="Q59ZX6"/>
<dbReference type="FunCoup" id="Q59ZX6">
    <property type="interactions" value="1194"/>
</dbReference>
<dbReference type="STRING" id="237561.Q59ZX6"/>
<dbReference type="EnsemblFungi" id="C1_14080W_A-T">
    <property type="protein sequence ID" value="C1_14080W_A-T-p1"/>
    <property type="gene ID" value="C1_14080W_A"/>
</dbReference>
<dbReference type="GeneID" id="3643345"/>
<dbReference type="KEGG" id="cal:CAALFM_C114080WA"/>
<dbReference type="CGD" id="CAL0000180258">
    <property type="gene designation" value="orf19.7215"/>
</dbReference>
<dbReference type="VEuPathDB" id="FungiDB:C1_14080W_A"/>
<dbReference type="eggNOG" id="KOG1837">
    <property type="taxonomic scope" value="Eukaryota"/>
</dbReference>
<dbReference type="HOGENOM" id="CLU_001128_3_1_1"/>
<dbReference type="InParanoid" id="Q59ZX6"/>
<dbReference type="OMA" id="GEPFDRY"/>
<dbReference type="OrthoDB" id="31183at2759"/>
<dbReference type="Proteomes" id="UP000000559">
    <property type="component" value="Chromosome 1"/>
</dbReference>
<dbReference type="GO" id="GO:0030686">
    <property type="term" value="C:90S preribosome"/>
    <property type="evidence" value="ECO:0000318"/>
    <property type="project" value="GO_Central"/>
</dbReference>
<dbReference type="GO" id="GO:0016020">
    <property type="term" value="C:membrane"/>
    <property type="evidence" value="ECO:0007669"/>
    <property type="project" value="UniProtKB-SubCell"/>
</dbReference>
<dbReference type="GO" id="GO:0030688">
    <property type="term" value="C:preribosome, small subunit precursor"/>
    <property type="evidence" value="ECO:0007669"/>
    <property type="project" value="EnsemblFungi"/>
</dbReference>
<dbReference type="GO" id="GO:0033553">
    <property type="term" value="C:rDNA heterochromatin"/>
    <property type="evidence" value="ECO:0007669"/>
    <property type="project" value="EnsemblFungi"/>
</dbReference>
<dbReference type="GO" id="GO:0032040">
    <property type="term" value="C:small-subunit processome"/>
    <property type="evidence" value="ECO:0000318"/>
    <property type="project" value="GO_Central"/>
</dbReference>
<dbReference type="GO" id="GO:0034455">
    <property type="term" value="C:t-UTP complex"/>
    <property type="evidence" value="ECO:0000318"/>
    <property type="project" value="GO_Central"/>
</dbReference>
<dbReference type="GO" id="GO:0030515">
    <property type="term" value="F:snoRNA binding"/>
    <property type="evidence" value="ECO:0000318"/>
    <property type="project" value="GO_Central"/>
</dbReference>
<dbReference type="GO" id="GO:0034511">
    <property type="term" value="F:U3 snoRNA binding"/>
    <property type="evidence" value="ECO:0007669"/>
    <property type="project" value="EnsemblFungi"/>
</dbReference>
<dbReference type="GO" id="GO:0000480">
    <property type="term" value="P:endonucleolytic cleavage in 5'-ETS of tricistronic rRNA transcript (SSU-rRNA, 5.8S rRNA, LSU-rRNA)"/>
    <property type="evidence" value="ECO:0007669"/>
    <property type="project" value="EnsemblFungi"/>
</dbReference>
<dbReference type="GO" id="GO:0000447">
    <property type="term" value="P:endonucleolytic cleavage in ITS1 to separate SSU-rRNA from 5.8S rRNA and LSU-rRNA from tricistronic rRNA transcript (SSU-rRNA, 5.8S rRNA, LSU-rRNA)"/>
    <property type="evidence" value="ECO:0007669"/>
    <property type="project" value="EnsemblFungi"/>
</dbReference>
<dbReference type="GO" id="GO:0000472">
    <property type="term" value="P:endonucleolytic cleavage to generate mature 5'-end of SSU-rRNA from (SSU-rRNA, 5.8S rRNA, LSU-rRNA)"/>
    <property type="evidence" value="ECO:0007669"/>
    <property type="project" value="EnsemblFungi"/>
</dbReference>
<dbReference type="GO" id="GO:0000462">
    <property type="term" value="P:maturation of SSU-rRNA from tricistronic rRNA transcript (SSU-rRNA, 5.8S rRNA, LSU-rRNA)"/>
    <property type="evidence" value="ECO:0000318"/>
    <property type="project" value="GO_Central"/>
</dbReference>
<dbReference type="GO" id="GO:0045943">
    <property type="term" value="P:positive regulation of transcription by RNA polymerase I"/>
    <property type="evidence" value="ECO:0000318"/>
    <property type="project" value="GO_Central"/>
</dbReference>
<dbReference type="FunFam" id="1.25.10.10:FF:000530">
    <property type="entry name" value="UTP10p Nucleolar protein"/>
    <property type="match status" value="1"/>
</dbReference>
<dbReference type="Gene3D" id="1.25.10.10">
    <property type="entry name" value="Leucine-rich Repeat Variant"/>
    <property type="match status" value="2"/>
</dbReference>
<dbReference type="InterPro" id="IPR011989">
    <property type="entry name" value="ARM-like"/>
</dbReference>
<dbReference type="InterPro" id="IPR016024">
    <property type="entry name" value="ARM-type_fold"/>
</dbReference>
<dbReference type="InterPro" id="IPR012954">
    <property type="entry name" value="BP28_C_dom"/>
</dbReference>
<dbReference type="InterPro" id="IPR021133">
    <property type="entry name" value="HEAT_type_2"/>
</dbReference>
<dbReference type="InterPro" id="IPR056473">
    <property type="entry name" value="HEAT_Utp10/HEAT1"/>
</dbReference>
<dbReference type="InterPro" id="IPR022125">
    <property type="entry name" value="U3snoRNP10_N"/>
</dbReference>
<dbReference type="InterPro" id="IPR040191">
    <property type="entry name" value="UTP10"/>
</dbReference>
<dbReference type="PANTHER" id="PTHR13457">
    <property type="entry name" value="BAP28"/>
    <property type="match status" value="1"/>
</dbReference>
<dbReference type="PANTHER" id="PTHR13457:SF1">
    <property type="entry name" value="HEAT REPEAT-CONTAINING PROTEIN 1"/>
    <property type="match status" value="1"/>
</dbReference>
<dbReference type="Pfam" id="PF08146">
    <property type="entry name" value="BP28CT"/>
    <property type="match status" value="1"/>
</dbReference>
<dbReference type="Pfam" id="PF23243">
    <property type="entry name" value="HEAT_HEATR1"/>
    <property type="match status" value="1"/>
</dbReference>
<dbReference type="Pfam" id="PF12397">
    <property type="entry name" value="U3snoRNP10"/>
    <property type="match status" value="1"/>
</dbReference>
<dbReference type="SMART" id="SM01036">
    <property type="entry name" value="BP28CT"/>
    <property type="match status" value="1"/>
</dbReference>
<dbReference type="SUPFAM" id="SSF48371">
    <property type="entry name" value="ARM repeat"/>
    <property type="match status" value="1"/>
</dbReference>
<dbReference type="PROSITE" id="PS50077">
    <property type="entry name" value="HEAT_REPEAT"/>
    <property type="match status" value="1"/>
</dbReference>
<proteinExistence type="inferred from homology"/>
<organism>
    <name type="scientific">Candida albicans (strain SC5314 / ATCC MYA-2876)</name>
    <name type="common">Yeast</name>
    <dbReference type="NCBI Taxonomy" id="237561"/>
    <lineage>
        <taxon>Eukaryota</taxon>
        <taxon>Fungi</taxon>
        <taxon>Dikarya</taxon>
        <taxon>Ascomycota</taxon>
        <taxon>Saccharomycotina</taxon>
        <taxon>Pichiomycetes</taxon>
        <taxon>Debaryomycetaceae</taxon>
        <taxon>Candida/Lodderomyces clade</taxon>
        <taxon>Candida</taxon>
    </lineage>
</organism>
<name>UTP10_CANAL</name>